<reference key="1">
    <citation type="submission" date="1998-10" db="EMBL/GenBank/DDBJ databases">
        <title>EZA1, a novel polycomb group gene from Arabidopsis thaliana.</title>
        <authorList>
            <person name="Bilodeau P."/>
            <person name="Luo M."/>
            <person name="Dennis E.S."/>
            <person name="Peacock W.J."/>
            <person name="Chaudhury A.M."/>
        </authorList>
    </citation>
    <scope>NUCLEOTIDE SEQUENCE [MRNA]</scope>
</reference>
<reference key="2">
    <citation type="journal article" date="1999" name="Nature">
        <title>Sequence and analysis of chromosome 4 of the plant Arabidopsis thaliana.</title>
        <authorList>
            <person name="Mayer K.F.X."/>
            <person name="Schueller C."/>
            <person name="Wambutt R."/>
            <person name="Murphy G."/>
            <person name="Volckaert G."/>
            <person name="Pohl T."/>
            <person name="Duesterhoeft A."/>
            <person name="Stiekema W."/>
            <person name="Entian K.-D."/>
            <person name="Terryn N."/>
            <person name="Harris B."/>
            <person name="Ansorge W."/>
            <person name="Brandt P."/>
            <person name="Grivell L.A."/>
            <person name="Rieger M."/>
            <person name="Weichselgartner M."/>
            <person name="de Simone V."/>
            <person name="Obermaier B."/>
            <person name="Mache R."/>
            <person name="Mueller M."/>
            <person name="Kreis M."/>
            <person name="Delseny M."/>
            <person name="Puigdomenech P."/>
            <person name="Watson M."/>
            <person name="Schmidtheini T."/>
            <person name="Reichert B."/>
            <person name="Portetelle D."/>
            <person name="Perez-Alonso M."/>
            <person name="Boutry M."/>
            <person name="Bancroft I."/>
            <person name="Vos P."/>
            <person name="Hoheisel J."/>
            <person name="Zimmermann W."/>
            <person name="Wedler H."/>
            <person name="Ridley P."/>
            <person name="Langham S.-A."/>
            <person name="McCullagh B."/>
            <person name="Bilham L."/>
            <person name="Robben J."/>
            <person name="van der Schueren J."/>
            <person name="Grymonprez B."/>
            <person name="Chuang Y.-J."/>
            <person name="Vandenbussche F."/>
            <person name="Braeken M."/>
            <person name="Weltjens I."/>
            <person name="Voet M."/>
            <person name="Bastiaens I."/>
            <person name="Aert R."/>
            <person name="Defoor E."/>
            <person name="Weitzenegger T."/>
            <person name="Bothe G."/>
            <person name="Ramsperger U."/>
            <person name="Hilbert H."/>
            <person name="Braun M."/>
            <person name="Holzer E."/>
            <person name="Brandt A."/>
            <person name="Peters S."/>
            <person name="van Staveren M."/>
            <person name="Dirkse W."/>
            <person name="Mooijman P."/>
            <person name="Klein Lankhorst R."/>
            <person name="Rose M."/>
            <person name="Hauf J."/>
            <person name="Koetter P."/>
            <person name="Berneiser S."/>
            <person name="Hempel S."/>
            <person name="Feldpausch M."/>
            <person name="Lamberth S."/>
            <person name="Van den Daele H."/>
            <person name="De Keyser A."/>
            <person name="Buysshaert C."/>
            <person name="Gielen J."/>
            <person name="Villarroel R."/>
            <person name="De Clercq R."/>
            <person name="van Montagu M."/>
            <person name="Rogers J."/>
            <person name="Cronin A."/>
            <person name="Quail M.A."/>
            <person name="Bray-Allen S."/>
            <person name="Clark L."/>
            <person name="Doggett J."/>
            <person name="Hall S."/>
            <person name="Kay M."/>
            <person name="Lennard N."/>
            <person name="McLay K."/>
            <person name="Mayes R."/>
            <person name="Pettett A."/>
            <person name="Rajandream M.A."/>
            <person name="Lyne M."/>
            <person name="Benes V."/>
            <person name="Rechmann S."/>
            <person name="Borkova D."/>
            <person name="Bloecker H."/>
            <person name="Scharfe M."/>
            <person name="Grimm M."/>
            <person name="Loehnert T.-H."/>
            <person name="Dose S."/>
            <person name="de Haan M."/>
            <person name="Maarse A.C."/>
            <person name="Schaefer M."/>
            <person name="Mueller-Auer S."/>
            <person name="Gabel C."/>
            <person name="Fuchs M."/>
            <person name="Fartmann B."/>
            <person name="Granderath K."/>
            <person name="Dauner D."/>
            <person name="Herzl A."/>
            <person name="Neumann S."/>
            <person name="Argiriou A."/>
            <person name="Vitale D."/>
            <person name="Liguori R."/>
            <person name="Piravandi E."/>
            <person name="Massenet O."/>
            <person name="Quigley F."/>
            <person name="Clabauld G."/>
            <person name="Muendlein A."/>
            <person name="Felber R."/>
            <person name="Schnabl S."/>
            <person name="Hiller R."/>
            <person name="Schmidt W."/>
            <person name="Lecharny A."/>
            <person name="Aubourg S."/>
            <person name="Chefdor F."/>
            <person name="Cooke R."/>
            <person name="Berger C."/>
            <person name="Monfort A."/>
            <person name="Casacuberta E."/>
            <person name="Gibbons T."/>
            <person name="Weber N."/>
            <person name="Vandenbol M."/>
            <person name="Bargues M."/>
            <person name="Terol J."/>
            <person name="Torres A."/>
            <person name="Perez-Perez A."/>
            <person name="Purnelle B."/>
            <person name="Bent E."/>
            <person name="Johnson S."/>
            <person name="Tacon D."/>
            <person name="Jesse T."/>
            <person name="Heijnen L."/>
            <person name="Schwarz S."/>
            <person name="Scholler P."/>
            <person name="Heber S."/>
            <person name="Francs P."/>
            <person name="Bielke C."/>
            <person name="Frishman D."/>
            <person name="Haase D."/>
            <person name="Lemcke K."/>
            <person name="Mewes H.-W."/>
            <person name="Stocker S."/>
            <person name="Zaccaria P."/>
            <person name="Bevan M."/>
            <person name="Wilson R.K."/>
            <person name="de la Bastide M."/>
            <person name="Habermann K."/>
            <person name="Parnell L."/>
            <person name="Dedhia N."/>
            <person name="Gnoj L."/>
            <person name="Schutz K."/>
            <person name="Huang E."/>
            <person name="Spiegel L."/>
            <person name="Sekhon M."/>
            <person name="Murray J."/>
            <person name="Sheet P."/>
            <person name="Cordes M."/>
            <person name="Abu-Threideh J."/>
            <person name="Stoneking T."/>
            <person name="Kalicki J."/>
            <person name="Graves T."/>
            <person name="Harmon G."/>
            <person name="Edwards J."/>
            <person name="Latreille P."/>
            <person name="Courtney L."/>
            <person name="Cloud J."/>
            <person name="Abbott A."/>
            <person name="Scott K."/>
            <person name="Johnson D."/>
            <person name="Minx P."/>
            <person name="Bentley D."/>
            <person name="Fulton B."/>
            <person name="Miller N."/>
            <person name="Greco T."/>
            <person name="Kemp K."/>
            <person name="Kramer J."/>
            <person name="Fulton L."/>
            <person name="Mardis E."/>
            <person name="Dante M."/>
            <person name="Pepin K."/>
            <person name="Hillier L.W."/>
            <person name="Nelson J."/>
            <person name="Spieth J."/>
            <person name="Ryan E."/>
            <person name="Andrews S."/>
            <person name="Geisel C."/>
            <person name="Layman D."/>
            <person name="Du H."/>
            <person name="Ali J."/>
            <person name="Berghoff A."/>
            <person name="Jones K."/>
            <person name="Drone K."/>
            <person name="Cotton M."/>
            <person name="Joshu C."/>
            <person name="Antonoiu B."/>
            <person name="Zidanic M."/>
            <person name="Strong C."/>
            <person name="Sun H."/>
            <person name="Lamar B."/>
            <person name="Yordan C."/>
            <person name="Ma P."/>
            <person name="Zhong J."/>
            <person name="Preston R."/>
            <person name="Vil D."/>
            <person name="Shekher M."/>
            <person name="Matero A."/>
            <person name="Shah R."/>
            <person name="Swaby I.K."/>
            <person name="O'Shaughnessy A."/>
            <person name="Rodriguez M."/>
            <person name="Hoffman J."/>
            <person name="Till S."/>
            <person name="Granat S."/>
            <person name="Shohdy N."/>
            <person name="Hasegawa A."/>
            <person name="Hameed A."/>
            <person name="Lodhi M."/>
            <person name="Johnson A."/>
            <person name="Chen E."/>
            <person name="Marra M.A."/>
            <person name="Martienssen R."/>
            <person name="McCombie W.R."/>
        </authorList>
    </citation>
    <scope>NUCLEOTIDE SEQUENCE [LARGE SCALE GENOMIC DNA]</scope>
    <source>
        <strain>cv. Columbia</strain>
    </source>
</reference>
<reference key="3">
    <citation type="journal article" date="2017" name="Plant J.">
        <title>Araport11: a complete reannotation of the Arabidopsis thaliana reference genome.</title>
        <authorList>
            <person name="Cheng C.Y."/>
            <person name="Krishnakumar V."/>
            <person name="Chan A.P."/>
            <person name="Thibaud-Nissen F."/>
            <person name="Schobel S."/>
            <person name="Town C.D."/>
        </authorList>
    </citation>
    <scope>GENOME REANNOTATION</scope>
    <source>
        <strain>cv. Columbia</strain>
    </source>
</reference>
<reference key="4">
    <citation type="journal article" date="2003" name="Science">
        <title>Empirical analysis of transcriptional activity in the Arabidopsis genome.</title>
        <authorList>
            <person name="Yamada K."/>
            <person name="Lim J."/>
            <person name="Dale J.M."/>
            <person name="Chen H."/>
            <person name="Shinn P."/>
            <person name="Palm C.J."/>
            <person name="Southwick A.M."/>
            <person name="Wu H.C."/>
            <person name="Kim C.J."/>
            <person name="Nguyen M."/>
            <person name="Pham P.K."/>
            <person name="Cheuk R.F."/>
            <person name="Karlin-Newmann G."/>
            <person name="Liu S.X."/>
            <person name="Lam B."/>
            <person name="Sakano H."/>
            <person name="Wu T."/>
            <person name="Yu G."/>
            <person name="Miranda M."/>
            <person name="Quach H.L."/>
            <person name="Tripp M."/>
            <person name="Chang C.H."/>
            <person name="Lee J.M."/>
            <person name="Toriumi M.J."/>
            <person name="Chan M.M."/>
            <person name="Tang C.C."/>
            <person name="Onodera C.S."/>
            <person name="Deng J.M."/>
            <person name="Akiyama K."/>
            <person name="Ansari Y."/>
            <person name="Arakawa T."/>
            <person name="Banh J."/>
            <person name="Banno F."/>
            <person name="Bowser L."/>
            <person name="Brooks S.Y."/>
            <person name="Carninci P."/>
            <person name="Chao Q."/>
            <person name="Choy N."/>
            <person name="Enju A."/>
            <person name="Goldsmith A.D."/>
            <person name="Gurjal M."/>
            <person name="Hansen N.F."/>
            <person name="Hayashizaki Y."/>
            <person name="Johnson-Hopson C."/>
            <person name="Hsuan V.W."/>
            <person name="Iida K."/>
            <person name="Karnes M."/>
            <person name="Khan S."/>
            <person name="Koesema E."/>
            <person name="Ishida J."/>
            <person name="Jiang P.X."/>
            <person name="Jones T."/>
            <person name="Kawai J."/>
            <person name="Kamiya A."/>
            <person name="Meyers C."/>
            <person name="Nakajima M."/>
            <person name="Narusaka M."/>
            <person name="Seki M."/>
            <person name="Sakurai T."/>
            <person name="Satou M."/>
            <person name="Tamse R."/>
            <person name="Vaysberg M."/>
            <person name="Wallender E.K."/>
            <person name="Wong C."/>
            <person name="Yamamura Y."/>
            <person name="Yuan S."/>
            <person name="Shinozaki K."/>
            <person name="Davis R.W."/>
            <person name="Theologis A."/>
            <person name="Ecker J.R."/>
        </authorList>
    </citation>
    <scope>NUCLEOTIDE SEQUENCE [LARGE SCALE MRNA]</scope>
    <source>
        <strain>cv. Columbia</strain>
    </source>
</reference>
<reference key="5">
    <citation type="journal article" date="2003" name="Plant Physiol.">
        <title>Comparative analysis of SET domain proteins in maize and Arabidopsis reveals multiple duplications preceding the divergence of monocots and dicots.</title>
        <authorList>
            <person name="Springer N.M."/>
            <person name="Napoli C.A."/>
            <person name="Selinger D.A."/>
            <person name="Pandey R."/>
            <person name="Cone K.C."/>
            <person name="Chandler V.L."/>
            <person name="Kaeppler H.F."/>
            <person name="Kaeppler S.M."/>
        </authorList>
    </citation>
    <scope>GENE FAMILY</scope>
    <scope>NOMENCLATURE</scope>
</reference>
<reference key="6">
    <citation type="journal article" date="2008" name="Proc. Natl. Acad. Sci. U.S.A.">
        <title>A PHD-polycomb repressive complex 2 triggers the epigenetic silencing of FLC during vernalization.</title>
        <authorList>
            <person name="De Lucia F."/>
            <person name="Crevillen P."/>
            <person name="Jones A.M.E."/>
            <person name="Greb T."/>
            <person name="Dean C."/>
        </authorList>
    </citation>
    <scope>SUBUNIT</scope>
    <scope>IDENTIFICATION BY MASS SPECTROMETRY</scope>
</reference>
<reference key="7">
    <citation type="journal article" date="2013" name="Dev. Biol.">
        <title>TAF13 interacts with PRC2 members and is essential for Arabidopsis seed development.</title>
        <authorList>
            <person name="Lindner M."/>
            <person name="Simonini S."/>
            <person name="Kooiker M."/>
            <person name="Gagliardini V."/>
            <person name="Somssich M."/>
            <person name="Hohenstatt M."/>
            <person name="Simon R."/>
            <person name="Grossniklaus U."/>
            <person name="Kater M.M."/>
        </authorList>
    </citation>
    <scope>INTERACTION WITH TAF13</scope>
</reference>
<reference key="8">
    <citation type="journal article" date="2017" name="Proc. Natl. Acad. Sci. U.S.A.">
        <title>Ctf4-related protein recruits LHP1-PRC2 to maintain H3K27me3 levels in dividing cells in Arabidopsis thaliana.</title>
        <authorList>
            <person name="Zhou Y."/>
            <person name="Tergemina E."/>
            <person name="Cui H."/>
            <person name="Foerderer A."/>
            <person name="Hartwig B."/>
            <person name="Velikkakam James G."/>
            <person name="Schneeberger K."/>
            <person name="Turck F."/>
        </authorList>
    </citation>
    <scope>INTERACTION WITH EOL1</scope>
    <source>
        <strain>cv. Columbia</strain>
    </source>
</reference>
<reference key="9">
    <citation type="journal article" date="2019" name="Plant J.">
        <title>Polycomb repressive complex 2 attenuates ABA-induced senescence in Arabidopsis.</title>
        <authorList>
            <person name="Liu C."/>
            <person name="Cheng J."/>
            <person name="Zhuang Y."/>
            <person name="Ye L."/>
            <person name="Li Z."/>
            <person name="Wang Y."/>
            <person name="Qi M."/>
            <person name="Xu L."/>
            <person name="Zhang Y."/>
        </authorList>
    </citation>
    <scope>FUNCTION</scope>
    <scope>DISRUPTION PHENOTYPE</scope>
</reference>
<reference key="10">
    <citation type="journal article" date="2020" name="Biochem. Soc. Trans.">
        <title>The complexity of PRC2 catalysts CLF and SWN in plants.</title>
        <authorList>
            <person name="Shu J."/>
            <person name="Chen C."/>
            <person name="Li C."/>
            <person name="Cui Y."/>
        </authorList>
    </citation>
    <scope>REVIEW</scope>
</reference>
<reference key="11">
    <citation type="journal article" date="2022" name="J. Integr. Plant Biol.">
        <title>HEXOKINASE1 forms a nuclear complex with the PRC2 subunits CURLY LEAF and SWINGER to regulate glucose signaling.</title>
        <authorList>
            <person name="Liu Y."/>
            <person name="Bai Y."/>
            <person name="Li N."/>
            <person name="Li M."/>
            <person name="Liu W."/>
            <person name="Yun D.J."/>
            <person name="Liu B."/>
            <person name="Xu Z.Y."/>
        </authorList>
    </citation>
    <scope>FUNCTION</scope>
    <scope>INTERACTION WITH HXK1</scope>
    <scope>SUBCELLULAR LOCATION</scope>
</reference>
<comment type="function">
    <text evidence="1 12 13">Polycomb group (PcG) protein. Catalytic subunit of some PcG multiprotein complex, which methylates 'Lys-27' of histone H3, leading to transcriptional repression of the affected target genes, mainly abscisic acid (ABA) responsive elements (PubMed:30307069). PcG proteins act by forming multiprotein complexes, which are required to maintain the transcriptionally repressive state of homeotic genes throughout development. PcG proteins are not required to initiate repression, but to maintain it during later stages of development (By similarity). Forms a nuclear complex with CLF and HXK1 to target common glucose-responsive genes and regulate glucose signaling by glucose-mediated gene repression (PubMed:35394700). Affects the recruitment of HXK1 to the target chromatin (PubMed:35394700).</text>
</comment>
<comment type="catalytic activity">
    <reaction evidence="6">
        <text>L-lysyl(27)-[histone H3] + 3 S-adenosyl-L-methionine = N(6),N(6),N(6)-trimethyl-L-lysyl(27)-[histone H3] + 3 S-adenosyl-L-homocysteine + 3 H(+)</text>
        <dbReference type="Rhea" id="RHEA:60292"/>
        <dbReference type="Rhea" id="RHEA-COMP:15535"/>
        <dbReference type="Rhea" id="RHEA-COMP:15548"/>
        <dbReference type="ChEBI" id="CHEBI:15378"/>
        <dbReference type="ChEBI" id="CHEBI:29969"/>
        <dbReference type="ChEBI" id="CHEBI:57856"/>
        <dbReference type="ChEBI" id="CHEBI:59789"/>
        <dbReference type="ChEBI" id="CHEBI:61961"/>
        <dbReference type="EC" id="2.1.1.356"/>
    </reaction>
</comment>
<comment type="subunit">
    <text evidence="9 10 11 13">Component of the plant homeodomain / polycomb repressive complex 2 (PHD-PRC2) large complex during prolonged cold, composed of core PRC2 components (VRN2, EZA1, FIE and MSI1), and three related PHD finger proteins (VIL1, VIL2 and VIN3) that mediates histone H3 trimethylation on 'Lys-27' H3K27me3. Interacts with TAF13. Interacts with EOL1 (PubMed:28428341). Interacts (via SANT domain) with HXK1 in the nucleus (PubMed:35394700).</text>
</comment>
<comment type="interaction">
    <interactant intactId="EBI-1102047">
        <id>Q9ZSM8</id>
    </interactant>
    <interactant intactId="EBI-2128880">
        <id>Q8W5B1</id>
        <label>VRN2</label>
    </interactant>
    <organismsDiffer>false</organismsDiffer>
    <experiments>3</experiments>
</comment>
<comment type="subcellular location">
    <subcellularLocation>
        <location evidence="4 5 13">Nucleus</location>
    </subcellularLocation>
</comment>
<comment type="disruption phenotype">
    <text evidence="12">The double mutant clf-50 swn-1 is hypersensitive to abscisic acid (ABA) associated with reduced ABA-responsive genes repression by histone H3 'Lys-27' methylation (H3K27me3).</text>
</comment>
<comment type="similarity">
    <text evidence="6">Belongs to the class V-like SAM-binding methyltransferase superfamily. Histone-lysine methyltransferase family. EZ subfamily.</text>
</comment>
<comment type="sequence caution" evidence="17">
    <conflict type="erroneous gene model prediction">
        <sequence resource="EMBL-CDS" id="AAC78694"/>
    </conflict>
</comment>
<comment type="sequence caution" evidence="17">
    <conflict type="erroneous gene model prediction">
        <sequence resource="EMBL-CDS" id="CAB80695"/>
    </conflict>
</comment>
<proteinExistence type="evidence at protein level"/>
<organism>
    <name type="scientific">Arabidopsis thaliana</name>
    <name type="common">Mouse-ear cress</name>
    <dbReference type="NCBI Taxonomy" id="3702"/>
    <lineage>
        <taxon>Eukaryota</taxon>
        <taxon>Viridiplantae</taxon>
        <taxon>Streptophyta</taxon>
        <taxon>Embryophyta</taxon>
        <taxon>Tracheophyta</taxon>
        <taxon>Spermatophyta</taxon>
        <taxon>Magnoliopsida</taxon>
        <taxon>eudicotyledons</taxon>
        <taxon>Gunneridae</taxon>
        <taxon>Pentapetalae</taxon>
        <taxon>rosids</taxon>
        <taxon>malvids</taxon>
        <taxon>Brassicales</taxon>
        <taxon>Brassicaceae</taxon>
        <taxon>Camelineae</taxon>
        <taxon>Arabidopsis</taxon>
    </lineage>
</organism>
<gene>
    <name evidence="16" type="primary">EZA1</name>
    <name evidence="14" type="synonym">SDG10</name>
    <name type="synonym">SET10</name>
    <name evidence="15" type="synonym">SWN</name>
    <name evidence="18" type="ordered locus">At4g02020</name>
    <name evidence="19" type="ORF">T10M13.3</name>
</gene>
<keyword id="KW-0938">Abscisic acid signaling pathway</keyword>
<keyword id="KW-0156">Chromatin regulator</keyword>
<keyword id="KW-0175">Coiled coil</keyword>
<keyword id="KW-0489">Methyltransferase</keyword>
<keyword id="KW-0539">Nucleus</keyword>
<keyword id="KW-1185">Reference proteome</keyword>
<keyword id="KW-0678">Repressor</keyword>
<keyword id="KW-0949">S-adenosyl-L-methionine</keyword>
<keyword id="KW-0804">Transcription</keyword>
<keyword id="KW-0805">Transcription regulation</keyword>
<keyword id="KW-0808">Transferase</keyword>
<protein>
    <recommendedName>
        <fullName evidence="16">Histone-lysine N-methyltransferase EZA1</fullName>
        <ecNumber evidence="6">2.1.1.356</ecNumber>
    </recommendedName>
    <alternativeName>
        <fullName>CURLY LEAF-like 1</fullName>
    </alternativeName>
    <alternativeName>
        <fullName evidence="14">Protein SET DOMAIN GROUP 10</fullName>
    </alternativeName>
    <alternativeName>
        <fullName evidence="15">Protein SWINGER</fullName>
    </alternativeName>
</protein>
<sequence length="856" mass="95396">MVTDDSNSSGRIKSHVDDDDDGEEEEDRLEGLENRLSELKRKIQGERVRSIKEKFEANRKKVDAHVSPFSSAASSRATAEDNGNSNMLSSRMRMPLCKLNGFSHGVGDRDYVPTKDVISASVKLPIAERIPPYTTWIFLDRNQRMAEDQSVVGRRQIYYEQHGGETLICSDSEEEPEPEEEKREFSEGEDSIIWLIGQEYGMGEEVQDALCQLLSVDASDILERYNELKLKDKQNTEEFSNSGFKLGISLEKGLGAALDSFDNLFCRRCLVFDCRLHGCSQPLISASEKQPYWSDYEGDRKPCSKHCYLQLKAVREVPETCSNFASKAEEKASEEECSKAVSSDVPHAAASGVSLQVEKTDIGIKNVDSSSGVEQEHGIRGKREVPILKDSNDLPNLSNKKQKTAASDTKMSFVNSVPSLDQALDSTKGDQGGTTDNKVNRDSEADAKEVGEPIPDNSVHDGGSSICQPHHGSGNGAIIIAEMSETSRPSTEWNPIEKDLYLKGVEIFGRNSCLIARNLLSGLKTCLDVSNYMRENEVSVFRRSSTPNLLLDDGRTDPGNDNDEVPPRTRLFRRKGKTRKLKYSTKSAGHPSVWKRIAGGKNQSCKQYTPCGCLSMCGKDCPCLTNETCCEKYCGCSKSCKNRFRGCHCAKSQCRSRQCPCFAAGRECDPDVCRNCWVSCGDGSLGEAPRRGEGQCGNMRLLLRQQQRILLGKSDVAGWGAFLKNSVSKNEYLGEYTGELISHHEADKRGKIYDRANSSFLFDLNDQYVLDAQRKGDKLKFANHSAKPNCYAKVMFVAGDHRVGIFANERIEASEELFYDYRYGPDQAPVWARKPEGSKKDDSAITHRRARKHQSH</sequence>
<dbReference type="EC" id="2.1.1.356" evidence="6"/>
<dbReference type="EMBL" id="AF100163">
    <property type="protein sequence ID" value="AAD09108.1"/>
    <property type="molecule type" value="mRNA"/>
</dbReference>
<dbReference type="EMBL" id="AF001308">
    <property type="protein sequence ID" value="AAC78694.1"/>
    <property type="status" value="ALT_SEQ"/>
    <property type="molecule type" value="Genomic_DNA"/>
</dbReference>
<dbReference type="EMBL" id="AL161493">
    <property type="protein sequence ID" value="CAB80695.1"/>
    <property type="status" value="ALT_SEQ"/>
    <property type="molecule type" value="Genomic_DNA"/>
</dbReference>
<dbReference type="EMBL" id="CP002687">
    <property type="protein sequence ID" value="AEE82112.1"/>
    <property type="molecule type" value="Genomic_DNA"/>
</dbReference>
<dbReference type="EMBL" id="AY057477">
    <property type="protein sequence ID" value="AAL09711.1"/>
    <property type="molecule type" value="mRNA"/>
</dbReference>
<dbReference type="EMBL" id="AY090293">
    <property type="protein sequence ID" value="AAL90954.1"/>
    <property type="molecule type" value="mRNA"/>
</dbReference>
<dbReference type="PIR" id="T01503">
    <property type="entry name" value="T01503"/>
</dbReference>
<dbReference type="PIR" id="T52415">
    <property type="entry name" value="T52415"/>
</dbReference>
<dbReference type="RefSeq" id="NP_567221.1">
    <property type="nucleotide sequence ID" value="NM_116433.3"/>
</dbReference>
<dbReference type="SMR" id="Q9ZSM8"/>
<dbReference type="BioGRID" id="13454">
    <property type="interactions" value="6"/>
</dbReference>
<dbReference type="DIP" id="DIP-35029N"/>
<dbReference type="FunCoup" id="Q9ZSM8">
    <property type="interactions" value="3308"/>
</dbReference>
<dbReference type="IntAct" id="Q9ZSM8">
    <property type="interactions" value="7"/>
</dbReference>
<dbReference type="STRING" id="3702.Q9ZSM8"/>
<dbReference type="iPTMnet" id="Q9ZSM8"/>
<dbReference type="PaxDb" id="3702-AT4G02020.1"/>
<dbReference type="ProteomicsDB" id="221823"/>
<dbReference type="EnsemblPlants" id="AT4G02020.1">
    <property type="protein sequence ID" value="AT4G02020.1"/>
    <property type="gene ID" value="AT4G02020"/>
</dbReference>
<dbReference type="GeneID" id="828165"/>
<dbReference type="Gramene" id="AT4G02020.1">
    <property type="protein sequence ID" value="AT4G02020.1"/>
    <property type="gene ID" value="AT4G02020"/>
</dbReference>
<dbReference type="KEGG" id="ath:AT4G02020"/>
<dbReference type="Araport" id="AT4G02020"/>
<dbReference type="TAIR" id="AT4G02020">
    <property type="gene designation" value="SWN"/>
</dbReference>
<dbReference type="eggNOG" id="KOG1079">
    <property type="taxonomic scope" value="Eukaryota"/>
</dbReference>
<dbReference type="HOGENOM" id="CLU_011060_0_0_1"/>
<dbReference type="InParanoid" id="Q9ZSM8"/>
<dbReference type="OrthoDB" id="6141102at2759"/>
<dbReference type="PhylomeDB" id="Q9ZSM8"/>
<dbReference type="PRO" id="PR:Q9ZSM8"/>
<dbReference type="Proteomes" id="UP000006548">
    <property type="component" value="Chromosome 4"/>
</dbReference>
<dbReference type="ExpressionAtlas" id="Q9ZSM8">
    <property type="expression patterns" value="baseline and differential"/>
</dbReference>
<dbReference type="GO" id="GO:0005677">
    <property type="term" value="C:chromatin silencing complex"/>
    <property type="evidence" value="ECO:0000314"/>
    <property type="project" value="UniProtKB"/>
</dbReference>
<dbReference type="GO" id="GO:0005634">
    <property type="term" value="C:nucleus"/>
    <property type="evidence" value="ECO:0000314"/>
    <property type="project" value="TAIR"/>
</dbReference>
<dbReference type="GO" id="GO:0031519">
    <property type="term" value="C:PcG protein complex"/>
    <property type="evidence" value="ECO:0007669"/>
    <property type="project" value="EnsemblPlants"/>
</dbReference>
<dbReference type="GO" id="GO:0009506">
    <property type="term" value="C:plasmodesma"/>
    <property type="evidence" value="ECO:0007005"/>
    <property type="project" value="TAIR"/>
</dbReference>
<dbReference type="GO" id="GO:0140951">
    <property type="term" value="F:histone H3K27 trimethyltransferase activity"/>
    <property type="evidence" value="ECO:0007669"/>
    <property type="project" value="UniProtKB-EC"/>
</dbReference>
<dbReference type="GO" id="GO:0003727">
    <property type="term" value="F:single-stranded RNA binding"/>
    <property type="evidence" value="ECO:0000314"/>
    <property type="project" value="TAIR"/>
</dbReference>
<dbReference type="GO" id="GO:0009738">
    <property type="term" value="P:abscisic acid-activated signaling pathway"/>
    <property type="evidence" value="ECO:0007669"/>
    <property type="project" value="UniProtKB-KW"/>
</dbReference>
<dbReference type="GO" id="GO:1990110">
    <property type="term" value="P:callus formation"/>
    <property type="evidence" value="ECO:0000316"/>
    <property type="project" value="TAIR"/>
</dbReference>
<dbReference type="GO" id="GO:0031507">
    <property type="term" value="P:heterochromatin formation"/>
    <property type="evidence" value="ECO:0007669"/>
    <property type="project" value="EnsemblPlants"/>
</dbReference>
<dbReference type="GO" id="GO:0032259">
    <property type="term" value="P:methylation"/>
    <property type="evidence" value="ECO:0007669"/>
    <property type="project" value="UniProtKB-KW"/>
</dbReference>
<dbReference type="GO" id="GO:0045814">
    <property type="term" value="P:negative regulation of gene expression, epigenetic"/>
    <property type="evidence" value="ECO:0000315"/>
    <property type="project" value="UniProtKB"/>
</dbReference>
<dbReference type="GO" id="GO:1900055">
    <property type="term" value="P:regulation of leaf senescence"/>
    <property type="evidence" value="ECO:0000316"/>
    <property type="project" value="TAIR"/>
</dbReference>
<dbReference type="GO" id="GO:0048587">
    <property type="term" value="P:regulation of short-day photoperiodism, flowering"/>
    <property type="evidence" value="ECO:0007669"/>
    <property type="project" value="EnsemblPlants"/>
</dbReference>
<dbReference type="GO" id="GO:0009737">
    <property type="term" value="P:response to abscisic acid"/>
    <property type="evidence" value="ECO:0000316"/>
    <property type="project" value="TAIR"/>
</dbReference>
<dbReference type="GO" id="GO:0010048">
    <property type="term" value="P:vernalization response"/>
    <property type="evidence" value="ECO:0000315"/>
    <property type="project" value="TAIR"/>
</dbReference>
<dbReference type="CDD" id="cd00167">
    <property type="entry name" value="SANT"/>
    <property type="match status" value="1"/>
</dbReference>
<dbReference type="CDD" id="cd10519">
    <property type="entry name" value="SET_EZH"/>
    <property type="match status" value="1"/>
</dbReference>
<dbReference type="FunFam" id="2.170.270.10:FF:000001">
    <property type="entry name" value="Putative histone-lysine N-methyltransferase EZH2"/>
    <property type="match status" value="1"/>
</dbReference>
<dbReference type="Gene3D" id="2.170.270.10">
    <property type="entry name" value="SET domain"/>
    <property type="match status" value="1"/>
</dbReference>
<dbReference type="InterPro" id="IPR026489">
    <property type="entry name" value="CXC_dom"/>
</dbReference>
<dbReference type="InterPro" id="IPR045318">
    <property type="entry name" value="EZH1/2-like"/>
</dbReference>
<dbReference type="InterPro" id="IPR025778">
    <property type="entry name" value="Hist-Lys_N-MeTrfase_plant"/>
</dbReference>
<dbReference type="InterPro" id="IPR041355">
    <property type="entry name" value="Pre-SET_CXC"/>
</dbReference>
<dbReference type="InterPro" id="IPR001005">
    <property type="entry name" value="SANT/Myb"/>
</dbReference>
<dbReference type="InterPro" id="IPR001214">
    <property type="entry name" value="SET_dom"/>
</dbReference>
<dbReference type="InterPro" id="IPR046341">
    <property type="entry name" value="SET_dom_sf"/>
</dbReference>
<dbReference type="InterPro" id="IPR033467">
    <property type="entry name" value="Tesmin/TSO1-like_CXC"/>
</dbReference>
<dbReference type="PANTHER" id="PTHR45747">
    <property type="entry name" value="HISTONE-LYSINE N-METHYLTRANSFERASE E(Z)"/>
    <property type="match status" value="1"/>
</dbReference>
<dbReference type="PANTHER" id="PTHR45747:SF14">
    <property type="entry name" value="HISTONE-LYSINE N-METHYLTRANSFERASE EZA1"/>
    <property type="match status" value="1"/>
</dbReference>
<dbReference type="Pfam" id="PF18264">
    <property type="entry name" value="preSET_CXC"/>
    <property type="match status" value="1"/>
</dbReference>
<dbReference type="Pfam" id="PF00856">
    <property type="entry name" value="SET"/>
    <property type="match status" value="1"/>
</dbReference>
<dbReference type="SMART" id="SM01114">
    <property type="entry name" value="CXC"/>
    <property type="match status" value="1"/>
</dbReference>
<dbReference type="SMART" id="SM00717">
    <property type="entry name" value="SANT"/>
    <property type="match status" value="1"/>
</dbReference>
<dbReference type="SMART" id="SM00317">
    <property type="entry name" value="SET"/>
    <property type="match status" value="1"/>
</dbReference>
<dbReference type="SUPFAM" id="SSF82199">
    <property type="entry name" value="SET domain"/>
    <property type="match status" value="1"/>
</dbReference>
<dbReference type="PROSITE" id="PS51633">
    <property type="entry name" value="CXC"/>
    <property type="match status" value="1"/>
</dbReference>
<dbReference type="PROSITE" id="PS51576">
    <property type="entry name" value="SAM_MT43_EZ"/>
    <property type="match status" value="1"/>
</dbReference>
<dbReference type="PROSITE" id="PS50280">
    <property type="entry name" value="SET"/>
    <property type="match status" value="1"/>
</dbReference>
<evidence type="ECO:0000250" key="1"/>
<evidence type="ECO:0000255" key="2"/>
<evidence type="ECO:0000255" key="3">
    <source>
        <dbReference type="PROSITE-ProRule" id="PRU00190"/>
    </source>
</evidence>
<evidence type="ECO:0000255" key="4">
    <source>
        <dbReference type="PROSITE-ProRule" id="PRU00624"/>
    </source>
</evidence>
<evidence type="ECO:0000255" key="5">
    <source>
        <dbReference type="PROSITE-ProRule" id="PRU00768"/>
    </source>
</evidence>
<evidence type="ECO:0000255" key="6">
    <source>
        <dbReference type="PROSITE-ProRule" id="PRU00909"/>
    </source>
</evidence>
<evidence type="ECO:0000255" key="7">
    <source>
        <dbReference type="PROSITE-ProRule" id="PRU00970"/>
    </source>
</evidence>
<evidence type="ECO:0000256" key="8">
    <source>
        <dbReference type="SAM" id="MobiDB-lite"/>
    </source>
</evidence>
<evidence type="ECO:0000269" key="9">
    <source>
    </source>
</evidence>
<evidence type="ECO:0000269" key="10">
    <source>
    </source>
</evidence>
<evidence type="ECO:0000269" key="11">
    <source>
    </source>
</evidence>
<evidence type="ECO:0000269" key="12">
    <source>
    </source>
</evidence>
<evidence type="ECO:0000269" key="13">
    <source>
    </source>
</evidence>
<evidence type="ECO:0000303" key="14">
    <source>
    </source>
</evidence>
<evidence type="ECO:0000303" key="15">
    <source>
    </source>
</evidence>
<evidence type="ECO:0000303" key="16">
    <source ref="1"/>
</evidence>
<evidence type="ECO:0000305" key="17"/>
<evidence type="ECO:0000312" key="18">
    <source>
        <dbReference type="Araport" id="AT4G02020"/>
    </source>
</evidence>
<evidence type="ECO:0000312" key="19">
    <source>
        <dbReference type="EMBL" id="AAC78694.1"/>
    </source>
</evidence>
<name>EZA1_ARATH</name>
<feature type="chain" id="PRO_0000213996" description="Histone-lysine N-methyltransferase EZA1">
    <location>
        <begin position="1"/>
        <end position="856"/>
    </location>
</feature>
<feature type="domain" description="SANT" evidence="4">
    <location>
        <begin position="489"/>
        <end position="539"/>
    </location>
</feature>
<feature type="domain" description="CXC" evidence="7">
    <location>
        <begin position="594"/>
        <end position="693"/>
    </location>
</feature>
<feature type="domain" description="SET" evidence="3">
    <location>
        <begin position="707"/>
        <end position="822"/>
    </location>
</feature>
<feature type="region of interest" description="Disordered" evidence="8">
    <location>
        <begin position="1"/>
        <end position="34"/>
    </location>
</feature>
<feature type="region of interest" description="Disordered" evidence="8">
    <location>
        <begin position="66"/>
        <end position="87"/>
    </location>
</feature>
<feature type="region of interest" description="Disordered" evidence="8">
    <location>
        <begin position="366"/>
        <end position="473"/>
    </location>
</feature>
<feature type="region of interest" description="Disordered" evidence="8">
    <location>
        <begin position="827"/>
        <end position="856"/>
    </location>
</feature>
<feature type="coiled-coil region" evidence="2">
    <location>
        <begin position="22"/>
        <end position="49"/>
    </location>
</feature>
<feature type="short sequence motif" description="Nuclear localization signal" evidence="5">
    <location>
        <begin position="838"/>
        <end position="845"/>
    </location>
</feature>
<feature type="compositionally biased region" description="Polar residues" evidence="8">
    <location>
        <begin position="1"/>
        <end position="11"/>
    </location>
</feature>
<feature type="compositionally biased region" description="Acidic residues" evidence="8">
    <location>
        <begin position="17"/>
        <end position="28"/>
    </location>
</feature>
<feature type="compositionally biased region" description="Polar residues" evidence="8">
    <location>
        <begin position="68"/>
        <end position="87"/>
    </location>
</feature>
<feature type="compositionally biased region" description="Basic and acidic residues" evidence="8">
    <location>
        <begin position="374"/>
        <end position="392"/>
    </location>
</feature>
<feature type="compositionally biased region" description="Polar residues" evidence="8">
    <location>
        <begin position="393"/>
        <end position="419"/>
    </location>
</feature>
<feature type="compositionally biased region" description="Basic and acidic residues" evidence="8">
    <location>
        <begin position="438"/>
        <end position="451"/>
    </location>
</feature>
<feature type="compositionally biased region" description="Basic and acidic residues" evidence="8">
    <location>
        <begin position="833"/>
        <end position="845"/>
    </location>
</feature>
<feature type="compositionally biased region" description="Basic residues" evidence="8">
    <location>
        <begin position="846"/>
        <end position="856"/>
    </location>
</feature>
<feature type="binding site" evidence="3">
    <location>
        <position position="821"/>
    </location>
    <ligand>
        <name>S-adenosyl-L-methionine</name>
        <dbReference type="ChEBI" id="CHEBI:59789"/>
    </ligand>
</feature>
<accession>Q9ZSM8</accession>
<accession>O04246</accession>